<reference key="1">
    <citation type="submission" date="1998-03" db="EMBL/GenBank/DDBJ databases">
        <authorList>
            <person name="Wattad C."/>
            <person name="Keen N.T."/>
        </authorList>
    </citation>
    <scope>NUCLEOTIDE SEQUENCE [GENOMIC DNA]</scope>
    <source>
        <strain>CG-14</strain>
    </source>
</reference>
<dbReference type="EC" id="4.2.2.2"/>
<dbReference type="EMBL" id="AF052632">
    <property type="protein sequence ID" value="AAD09857.1"/>
    <property type="molecule type" value="Genomic_DNA"/>
</dbReference>
<dbReference type="SMR" id="O59939"/>
<dbReference type="CAZy" id="PL1">
    <property type="family name" value="Polysaccharide Lyase Family 1"/>
</dbReference>
<dbReference type="GlyCosmos" id="O59939">
    <property type="glycosylation" value="1 site, No reported glycans"/>
</dbReference>
<dbReference type="UniPathway" id="UPA00545">
    <property type="reaction ID" value="UER00824"/>
</dbReference>
<dbReference type="PHI-base" id="PHI:222"/>
<dbReference type="GO" id="GO:0005576">
    <property type="term" value="C:extracellular region"/>
    <property type="evidence" value="ECO:0007669"/>
    <property type="project" value="UniProtKB-SubCell"/>
</dbReference>
<dbReference type="GO" id="GO:0046872">
    <property type="term" value="F:metal ion binding"/>
    <property type="evidence" value="ECO:0007669"/>
    <property type="project" value="UniProtKB-KW"/>
</dbReference>
<dbReference type="GO" id="GO:0030570">
    <property type="term" value="F:pectate lyase activity"/>
    <property type="evidence" value="ECO:0007669"/>
    <property type="project" value="UniProtKB-EC"/>
</dbReference>
<dbReference type="GO" id="GO:0045490">
    <property type="term" value="P:pectin catabolic process"/>
    <property type="evidence" value="ECO:0007669"/>
    <property type="project" value="UniProtKB-UniPathway"/>
</dbReference>
<dbReference type="FunFam" id="2.160.20.10:FF:000036">
    <property type="entry name" value="Pectate lyase A"/>
    <property type="match status" value="1"/>
</dbReference>
<dbReference type="Gene3D" id="2.160.20.10">
    <property type="entry name" value="Single-stranded right-handed beta-helix, Pectin lyase-like"/>
    <property type="match status" value="1"/>
</dbReference>
<dbReference type="InterPro" id="IPR002022">
    <property type="entry name" value="Pec_lyase"/>
</dbReference>
<dbReference type="InterPro" id="IPR012334">
    <property type="entry name" value="Pectin_lyas_fold"/>
</dbReference>
<dbReference type="InterPro" id="IPR011050">
    <property type="entry name" value="Pectin_lyase_fold/virulence"/>
</dbReference>
<dbReference type="InterPro" id="IPR045032">
    <property type="entry name" value="PEL"/>
</dbReference>
<dbReference type="PANTHER" id="PTHR31683">
    <property type="entry name" value="PECTATE LYASE 18-RELATED"/>
    <property type="match status" value="1"/>
</dbReference>
<dbReference type="PANTHER" id="PTHR31683:SF18">
    <property type="entry name" value="PECTATE LYASE 21-RELATED"/>
    <property type="match status" value="1"/>
</dbReference>
<dbReference type="Pfam" id="PF00544">
    <property type="entry name" value="Pectate_lyase_4"/>
    <property type="match status" value="1"/>
</dbReference>
<dbReference type="SMART" id="SM00656">
    <property type="entry name" value="Amb_all"/>
    <property type="match status" value="1"/>
</dbReference>
<dbReference type="SUPFAM" id="SSF51126">
    <property type="entry name" value="Pectin lyase-like"/>
    <property type="match status" value="1"/>
</dbReference>
<sequence>MKFTGSPLLWPSWLPLPAPPPPLPSVTRRRDPRTVGKRAAITDACDVGYGAGTTGGSGGTTTTVSTPAQFTAAATSDEKAVIVVKGAITGATKVKVGSNKSIIGRAGSSLTGVGLYINKQENVIVRNMKISKVLADNGDRIGIQASSKVWVDHCDLSSDKKNNGKDYYDGLLDITHASMAVTVSNTYIHDHYKGSLVGHSDSNSAEDTGKLYVTYANNHWYNVASRNPSVRFGNVHIFNNYAEKLETSGVNTRMGAQLLIESSVFSDTKKAVTFLDSKSTGYAVVNDVDLGGSTNDRPQGTFTKPDYSYTLLGSSKVKAAVVGTAGQTLTF</sequence>
<feature type="signal peptide" evidence="2">
    <location>
        <begin position="1"/>
        <end position="25"/>
    </location>
</feature>
<feature type="chain" id="PRO_0000024895" description="Pectate lyase B">
    <location>
        <begin position="26"/>
        <end position="331"/>
    </location>
</feature>
<feature type="active site" evidence="2">
    <location>
        <position position="226"/>
    </location>
</feature>
<feature type="binding site" evidence="1">
    <location>
        <position position="139"/>
    </location>
    <ligand>
        <name>Ca(2+)</name>
        <dbReference type="ChEBI" id="CHEBI:29108"/>
    </ligand>
</feature>
<feature type="binding site" evidence="1">
    <location>
        <position position="169"/>
    </location>
    <ligand>
        <name>Ca(2+)</name>
        <dbReference type="ChEBI" id="CHEBI:29108"/>
    </ligand>
</feature>
<feature type="binding site" evidence="1">
    <location>
        <position position="173"/>
    </location>
    <ligand>
        <name>Ca(2+)</name>
        <dbReference type="ChEBI" id="CHEBI:29108"/>
    </ligand>
</feature>
<feature type="glycosylation site" description="N-linked (GlcNAc...) asparagine" evidence="2">
    <location>
        <position position="99"/>
    </location>
</feature>
<organism>
    <name type="scientific">Colletotrichum gloeosporioides</name>
    <name type="common">Anthracnose fungus</name>
    <name type="synonym">Glomerella cingulata</name>
    <dbReference type="NCBI Taxonomy" id="474922"/>
    <lineage>
        <taxon>Eukaryota</taxon>
        <taxon>Fungi</taxon>
        <taxon>Dikarya</taxon>
        <taxon>Ascomycota</taxon>
        <taxon>Pezizomycotina</taxon>
        <taxon>Sordariomycetes</taxon>
        <taxon>Hypocreomycetidae</taxon>
        <taxon>Glomerellales</taxon>
        <taxon>Glomerellaceae</taxon>
        <taxon>Colletotrichum</taxon>
        <taxon>Colletotrichum gloeosporioides species complex</taxon>
    </lineage>
</organism>
<gene>
    <name type="primary">PLB</name>
</gene>
<accession>O59939</accession>
<keyword id="KW-0106">Calcium</keyword>
<keyword id="KW-0325">Glycoprotein</keyword>
<keyword id="KW-0456">Lyase</keyword>
<keyword id="KW-0479">Metal-binding</keyword>
<keyword id="KW-0964">Secreted</keyword>
<keyword id="KW-0732">Signal</keyword>
<keyword id="KW-0843">Virulence</keyword>
<evidence type="ECO:0000250" key="1"/>
<evidence type="ECO:0000255" key="2"/>
<evidence type="ECO:0000305" key="3"/>
<proteinExistence type="inferred from homology"/>
<protein>
    <recommendedName>
        <fullName>Pectate lyase B</fullName>
        <ecNumber>4.2.2.2</ecNumber>
    </recommendedName>
</protein>
<name>PLYB_COLGL</name>
<comment type="function">
    <text>Acts as a virulence factor active in plant tissue maceration.</text>
</comment>
<comment type="catalytic activity">
    <reaction>
        <text>Eliminative cleavage of (1-&gt;4)-alpha-D-galacturonan to give oligosaccharides with 4-deoxy-alpha-D-galact-4-enuronosyl groups at their non-reducing ends.</text>
        <dbReference type="EC" id="4.2.2.2"/>
    </reaction>
</comment>
<comment type="cofactor">
    <cofactor evidence="1">
        <name>Ca(2+)</name>
        <dbReference type="ChEBI" id="CHEBI:29108"/>
    </cofactor>
    <text evidence="1">Binds 1 Ca(2+) ion per subunit.</text>
</comment>
<comment type="pathway">
    <text>Glycan metabolism; pectin degradation; 2-dehydro-3-deoxy-D-gluconate from pectin: step 2/5.</text>
</comment>
<comment type="subcellular location">
    <subcellularLocation>
        <location evidence="3">Secreted</location>
    </subcellularLocation>
</comment>
<comment type="similarity">
    <text evidence="3">Belongs to the polysaccharide lyase 1 family.</text>
</comment>